<name>S26A2_HORSE</name>
<gene>
    <name type="primary">SLC26A2</name>
</gene>
<sequence length="736" mass="81489">MSSESKEPHVLSPKDSFEGNDRYSPPSRIHLELEKKSSTDFKQFEASEPCRPYPRIHMEPQEKSNTNFKQFVIKKLQKSCQCSPTKAKNMIFGFLPVLQWLPKYDLKKNILGDVMSGLIVGILLVPQSIAYSLLAGQEPIYGLYTSFFASLIYFLLGTSRHISVGIFGVLCLMIGEVVDRELLKAGYDTVHIAPSLGMVSNGSTSLNQTSDRICDRSCYAIKVGSTVTFLAGIYQVAMGFFQVGFVSVYLSDALLSGFVTGASFTILTSQAKYLLGLSLPRSSGVGSLITTWIHIFRNIHKTNVCDLITSLLCLLVLLPTKELNEHFKSKLKAPIPTELVVVVAATLASHFGKLHEKYNTSIAGHIPTGFMPPKAPDWNLIPSVAVDAIAISIIGFAITVSLSEMFAKKHGYTVKANQEMYAIGFCNIIPSFFHCFTTSAALAKTLVKESTGCQSQLSGVMTALVLLLVLLVIAPLFYSLQKSVLGVITIVNLRGALRKFRDLPKMWRVSRMDTVIWFVTMLSSALISTELGLLIGVCFSMFCVILRTQKPKVSLLGLVEETEIFESMSAYKNLQARPGIKIFRFVAPLYYINKECFKSALYKKTLNPVLVKAAQKKAAKRKIKKQPVTLSGIQNEISVQLSHDPLELRTIVIDCSAIQFLDTAGIHTLKEVRRDYEAIGIQVLLAQCNPSVRDSLARGEYCKDEEENLLFYSVYEAMAFAEESQNQKGICIPNGL</sequence>
<proteinExistence type="evidence at transcript level"/>
<accession>Q65AC2</accession>
<accession>Q4W444</accession>
<comment type="function">
    <text evidence="3">Sulfate transporter which mediates sulfate uptake into chondrocytes in order to maintain adequate sulfation of proteoglycans which is needed for cartilage development (By similarity). Mediates electroneutral anion exchange of sulfate ions for oxalate ions, sulfate and oxalate ions for chloride and/or hydroxyl ions and chloride ions for bromide, iodide and nitrate ions (By similarity). The coupling of sulfate transport to both hydroxyl and chloride ions likely serves to ensure transport at both acidic pH when most sulfate uptake is mediated by sulfate-hydroxide exchange and alkaline pH when most sulfate uptake is mediated by sulfate-chloride exchange (By similarity). Essential for chondrocyte proliferation, differentiation and cell size expansion (By similarity).</text>
</comment>
<comment type="catalytic activity">
    <reaction evidence="3">
        <text>oxalate(in) + sulfate(out) = oxalate(out) + sulfate(in)</text>
        <dbReference type="Rhea" id="RHEA:72275"/>
        <dbReference type="ChEBI" id="CHEBI:16189"/>
        <dbReference type="ChEBI" id="CHEBI:30623"/>
    </reaction>
</comment>
<comment type="catalytic activity">
    <reaction evidence="3">
        <text>sulfate(out) + 2 chloride(in) = sulfate(in) + 2 chloride(out)</text>
        <dbReference type="Rhea" id="RHEA:75091"/>
        <dbReference type="ChEBI" id="CHEBI:16189"/>
        <dbReference type="ChEBI" id="CHEBI:17996"/>
    </reaction>
</comment>
<comment type="catalytic activity">
    <reaction evidence="3">
        <text>oxalate(out) + 2 chloride(in) = oxalate(in) + 2 chloride(out)</text>
        <dbReference type="Rhea" id="RHEA:75095"/>
        <dbReference type="ChEBI" id="CHEBI:17996"/>
        <dbReference type="ChEBI" id="CHEBI:30623"/>
    </reaction>
</comment>
<comment type="catalytic activity">
    <reaction evidence="3">
        <text>bromide(in) + chloride(out) = bromide(out) + chloride(in)</text>
        <dbReference type="Rhea" id="RHEA:75335"/>
        <dbReference type="ChEBI" id="CHEBI:15858"/>
        <dbReference type="ChEBI" id="CHEBI:17996"/>
    </reaction>
</comment>
<comment type="catalytic activity">
    <reaction evidence="3">
        <text>nitrate(in) + chloride(out) = nitrate(out) + chloride(in)</text>
        <dbReference type="Rhea" id="RHEA:75339"/>
        <dbReference type="ChEBI" id="CHEBI:17632"/>
        <dbReference type="ChEBI" id="CHEBI:17996"/>
    </reaction>
</comment>
<comment type="catalytic activity">
    <reaction evidence="3">
        <text>iodide(in) + chloride(out) = iodide(out) + chloride(in)</text>
        <dbReference type="Rhea" id="RHEA:72379"/>
        <dbReference type="ChEBI" id="CHEBI:16382"/>
        <dbReference type="ChEBI" id="CHEBI:17996"/>
    </reaction>
</comment>
<comment type="subcellular location">
    <subcellularLocation>
        <location evidence="2">Cell membrane</location>
        <topology evidence="4">Multi-pass membrane protein</topology>
    </subcellularLocation>
    <subcellularLocation>
        <location evidence="1">Apical cell membrane</location>
        <topology evidence="4">Multi-pass membrane protein</topology>
    </subcellularLocation>
</comment>
<comment type="PTM">
    <text evidence="2">N-glycosylated.</text>
</comment>
<comment type="similarity">
    <text evidence="7">Belongs to the SLC26A/SulP transporter (TC 2.A.53) family.</text>
</comment>
<comment type="sequence caution" evidence="7">
    <conflict type="erroneous gene model prediction">
        <sequence resource="EMBL-CDS" id="CAG27693"/>
    </conflict>
</comment>
<dbReference type="EMBL" id="AJ698508">
    <property type="protein sequence ID" value="CAG27404.1"/>
    <property type="molecule type" value="mRNA"/>
</dbReference>
<dbReference type="EMBL" id="AJ698728">
    <property type="protein sequence ID" value="CAG27563.1"/>
    <property type="molecule type" value="Genomic_DNA"/>
</dbReference>
<dbReference type="EMBL" id="AJ698944">
    <property type="protein sequence ID" value="CAG27693.1"/>
    <property type="status" value="ALT_SEQ"/>
    <property type="molecule type" value="Genomic_DNA"/>
</dbReference>
<dbReference type="RefSeq" id="NP_001075403.1">
    <property type="nucleotide sequence ID" value="NM_001081934.2"/>
</dbReference>
<dbReference type="RefSeq" id="XP_005599193.2">
    <property type="nucleotide sequence ID" value="XM_005599136.4"/>
</dbReference>
<dbReference type="RefSeq" id="XP_023472667.1">
    <property type="nucleotide sequence ID" value="XM_023616899.2"/>
</dbReference>
<dbReference type="RefSeq" id="XP_023472668.1">
    <property type="nucleotide sequence ID" value="XM_023616900.2"/>
</dbReference>
<dbReference type="RefSeq" id="XP_070088719.1">
    <property type="nucleotide sequence ID" value="XM_070232618.1"/>
</dbReference>
<dbReference type="RefSeq" id="XP_070088720.1">
    <property type="nucleotide sequence ID" value="XM_070232619.1"/>
</dbReference>
<dbReference type="RefSeq" id="XP_070088721.1">
    <property type="nucleotide sequence ID" value="XM_070232620.1"/>
</dbReference>
<dbReference type="SMR" id="Q65AC2"/>
<dbReference type="FunCoup" id="Q65AC2">
    <property type="interactions" value="297"/>
</dbReference>
<dbReference type="STRING" id="9796.ENSECAP00000020821"/>
<dbReference type="GlyCosmos" id="Q65AC2">
    <property type="glycosylation" value="2 sites, No reported glycans"/>
</dbReference>
<dbReference type="PaxDb" id="9796-ENSECAP00000020821"/>
<dbReference type="Ensembl" id="ENSECAT00000025038.3">
    <property type="protein sequence ID" value="ENSECAP00000020821.2"/>
    <property type="gene ID" value="ENSECAG00000023363.3"/>
</dbReference>
<dbReference type="GeneID" id="100034141"/>
<dbReference type="KEGG" id="ecb:100034141"/>
<dbReference type="CTD" id="1836"/>
<dbReference type="VGNC" id="VGNC:55509">
    <property type="gene designation" value="SLC26A2"/>
</dbReference>
<dbReference type="GeneTree" id="ENSGT01120000271864"/>
<dbReference type="InParanoid" id="Q65AC2"/>
<dbReference type="OMA" id="PALYWIP"/>
<dbReference type="OrthoDB" id="288203at2759"/>
<dbReference type="Proteomes" id="UP000002281">
    <property type="component" value="Chromosome 14"/>
</dbReference>
<dbReference type="Bgee" id="ENSECAG00000023363">
    <property type="expression patterns" value="Expressed in articular cartilage of joint and 23 other cell types or tissues"/>
</dbReference>
<dbReference type="GO" id="GO:0016324">
    <property type="term" value="C:apical plasma membrane"/>
    <property type="evidence" value="ECO:0007669"/>
    <property type="project" value="UniProtKB-SubCell"/>
</dbReference>
<dbReference type="GO" id="GO:0005886">
    <property type="term" value="C:plasma membrane"/>
    <property type="evidence" value="ECO:0000250"/>
    <property type="project" value="UniProtKB"/>
</dbReference>
<dbReference type="GO" id="GO:0015106">
    <property type="term" value="F:bicarbonate transmembrane transporter activity"/>
    <property type="evidence" value="ECO:0000318"/>
    <property type="project" value="GO_Central"/>
</dbReference>
<dbReference type="GO" id="GO:0015108">
    <property type="term" value="F:chloride transmembrane transporter activity"/>
    <property type="evidence" value="ECO:0000318"/>
    <property type="project" value="GO_Central"/>
</dbReference>
<dbReference type="GO" id="GO:0019531">
    <property type="term" value="F:oxalate transmembrane transporter activity"/>
    <property type="evidence" value="ECO:0000318"/>
    <property type="project" value="GO_Central"/>
</dbReference>
<dbReference type="GO" id="GO:0008271">
    <property type="term" value="F:secondary active sulfate transmembrane transporter activity"/>
    <property type="evidence" value="ECO:0007669"/>
    <property type="project" value="InterPro"/>
</dbReference>
<dbReference type="GO" id="GO:0005452">
    <property type="term" value="F:solute:inorganic anion antiporter activity"/>
    <property type="evidence" value="ECO:0007669"/>
    <property type="project" value="Ensembl"/>
</dbReference>
<dbReference type="GO" id="GO:0015116">
    <property type="term" value="F:sulfate transmembrane transporter activity"/>
    <property type="evidence" value="ECO:0000250"/>
    <property type="project" value="UniProtKB"/>
</dbReference>
<dbReference type="GO" id="GO:1902476">
    <property type="term" value="P:chloride transmembrane transport"/>
    <property type="evidence" value="ECO:0000318"/>
    <property type="project" value="GO_Central"/>
</dbReference>
<dbReference type="GO" id="GO:0002062">
    <property type="term" value="P:chondrocyte differentiation"/>
    <property type="evidence" value="ECO:0000250"/>
    <property type="project" value="UniProtKB"/>
</dbReference>
<dbReference type="GO" id="GO:0035988">
    <property type="term" value="P:chondrocyte proliferation"/>
    <property type="evidence" value="ECO:0000250"/>
    <property type="project" value="UniProtKB"/>
</dbReference>
<dbReference type="GO" id="GO:1902358">
    <property type="term" value="P:sulfate transmembrane transport"/>
    <property type="evidence" value="ECO:0000250"/>
    <property type="project" value="UniProtKB"/>
</dbReference>
<dbReference type="FunFam" id="3.30.750.24:FF:000015">
    <property type="entry name" value="Sulfate transporter"/>
    <property type="match status" value="1"/>
</dbReference>
<dbReference type="Gene3D" id="3.30.750.24">
    <property type="entry name" value="STAS domain"/>
    <property type="match status" value="1"/>
</dbReference>
<dbReference type="InterPro" id="IPR018045">
    <property type="entry name" value="S04_transporter_CS"/>
</dbReference>
<dbReference type="InterPro" id="IPR011547">
    <property type="entry name" value="SLC26A/SulP_dom"/>
</dbReference>
<dbReference type="InterPro" id="IPR001902">
    <property type="entry name" value="SLC26A/SulP_fam"/>
</dbReference>
<dbReference type="InterPro" id="IPR002645">
    <property type="entry name" value="STAS_dom"/>
</dbReference>
<dbReference type="InterPro" id="IPR036513">
    <property type="entry name" value="STAS_dom_sf"/>
</dbReference>
<dbReference type="NCBIfam" id="TIGR00815">
    <property type="entry name" value="sulP"/>
    <property type="match status" value="1"/>
</dbReference>
<dbReference type="PANTHER" id="PTHR11814">
    <property type="entry name" value="SULFATE TRANSPORTER"/>
    <property type="match status" value="1"/>
</dbReference>
<dbReference type="Pfam" id="PF01740">
    <property type="entry name" value="STAS"/>
    <property type="match status" value="1"/>
</dbReference>
<dbReference type="Pfam" id="PF00916">
    <property type="entry name" value="Sulfate_transp"/>
    <property type="match status" value="1"/>
</dbReference>
<dbReference type="SUPFAM" id="SSF52091">
    <property type="entry name" value="SpoIIaa-like"/>
    <property type="match status" value="1"/>
</dbReference>
<dbReference type="PROSITE" id="PS01130">
    <property type="entry name" value="SLC26A"/>
    <property type="match status" value="1"/>
</dbReference>
<dbReference type="PROSITE" id="PS50801">
    <property type="entry name" value="STAS"/>
    <property type="match status" value="1"/>
</dbReference>
<organism>
    <name type="scientific">Equus caballus</name>
    <name type="common">Horse</name>
    <dbReference type="NCBI Taxonomy" id="9796"/>
    <lineage>
        <taxon>Eukaryota</taxon>
        <taxon>Metazoa</taxon>
        <taxon>Chordata</taxon>
        <taxon>Craniata</taxon>
        <taxon>Vertebrata</taxon>
        <taxon>Euteleostomi</taxon>
        <taxon>Mammalia</taxon>
        <taxon>Eutheria</taxon>
        <taxon>Laurasiatheria</taxon>
        <taxon>Perissodactyla</taxon>
        <taxon>Equidae</taxon>
        <taxon>Equus</taxon>
    </lineage>
</organism>
<protein>
    <recommendedName>
        <fullName>Sulfate transporter</fullName>
    </recommendedName>
    <alternativeName>
        <fullName>Solute carrier family 26 member 2</fullName>
    </alternativeName>
</protein>
<feature type="chain" id="PRO_5000072638" description="Sulfate transporter">
    <location>
        <begin position="1"/>
        <end position="736"/>
    </location>
</feature>
<feature type="transmembrane region" description="Helical" evidence="4">
    <location>
        <begin position="114"/>
        <end position="134"/>
    </location>
</feature>
<feature type="transmembrane region" description="Helical" evidence="4">
    <location>
        <begin position="139"/>
        <end position="159"/>
    </location>
</feature>
<feature type="transmembrane region" description="Helical" evidence="4">
    <location>
        <begin position="229"/>
        <end position="249"/>
    </location>
</feature>
<feature type="transmembrane region" description="Helical" evidence="4">
    <location>
        <begin position="257"/>
        <end position="277"/>
    </location>
</feature>
<feature type="transmembrane region" description="Helical" evidence="4">
    <location>
        <begin position="380"/>
        <end position="400"/>
    </location>
</feature>
<feature type="transmembrane region" description="Helical" evidence="4">
    <location>
        <begin position="422"/>
        <end position="442"/>
    </location>
</feature>
<feature type="transmembrane region" description="Helical" evidence="4">
    <location>
        <begin position="457"/>
        <end position="477"/>
    </location>
</feature>
<feature type="transmembrane region" description="Helical" evidence="4">
    <location>
        <begin position="526"/>
        <end position="546"/>
    </location>
</feature>
<feature type="domain" description="STAS" evidence="5">
    <location>
        <begin position="570"/>
        <end position="721"/>
    </location>
</feature>
<feature type="region of interest" description="Disordered" evidence="6">
    <location>
        <begin position="1"/>
        <end position="28"/>
    </location>
</feature>
<feature type="modified residue" description="Phosphoserine" evidence="2">
    <location>
        <position position="12"/>
    </location>
</feature>
<feature type="modified residue" description="Phosphoserine" evidence="2">
    <location>
        <position position="16"/>
    </location>
</feature>
<feature type="glycosylation site" description="N-linked (GlcNAc...) asparagine" evidence="4">
    <location>
        <position position="201"/>
    </location>
</feature>
<feature type="glycosylation site" description="N-linked (GlcNAc...) asparagine" evidence="4">
    <location>
        <position position="207"/>
    </location>
</feature>
<reference key="1">
    <citation type="journal article" date="2004" name="Cytogenet. Genome Res.">
        <title>Assignment of the equine solute carrier 26A2 gene (SLC26A2) to equine chromosome 14q15--&gt;q21 (ECA14q15--&gt;q21) by in situ hybridization and radiation hybrid panel mapping.</title>
        <authorList>
            <person name="Brenig B."/>
            <person name="Beck J."/>
            <person name="Hall A.J."/>
            <person name="Broad T.E."/>
            <person name="Chowdhary B.P."/>
            <person name="Piumi F."/>
        </authorList>
    </citation>
    <scope>NUCLEOTIDE SEQUENCE [GENOMIC DNA / MRNA]</scope>
</reference>
<evidence type="ECO:0000250" key="1">
    <source>
        <dbReference type="UniProtKB" id="O70531"/>
    </source>
</evidence>
<evidence type="ECO:0000250" key="2">
    <source>
        <dbReference type="UniProtKB" id="P50443"/>
    </source>
</evidence>
<evidence type="ECO:0000250" key="3">
    <source>
        <dbReference type="UniProtKB" id="Q62273"/>
    </source>
</evidence>
<evidence type="ECO:0000255" key="4"/>
<evidence type="ECO:0000255" key="5">
    <source>
        <dbReference type="PROSITE-ProRule" id="PRU00198"/>
    </source>
</evidence>
<evidence type="ECO:0000256" key="6">
    <source>
        <dbReference type="SAM" id="MobiDB-lite"/>
    </source>
</evidence>
<evidence type="ECO:0000305" key="7"/>
<keyword id="KW-1003">Cell membrane</keyword>
<keyword id="KW-0325">Glycoprotein</keyword>
<keyword id="KW-0472">Membrane</keyword>
<keyword id="KW-0597">Phosphoprotein</keyword>
<keyword id="KW-1185">Reference proteome</keyword>
<keyword id="KW-0812">Transmembrane</keyword>
<keyword id="KW-1133">Transmembrane helix</keyword>
<keyword id="KW-0813">Transport</keyword>